<protein>
    <recommendedName>
        <fullName>C-C motif chemokine 21a</fullName>
    </recommendedName>
    <alternativeName>
        <fullName>6Ckine</fullName>
    </alternativeName>
    <alternativeName>
        <fullName>Beta-chemokine exodus-2</fullName>
    </alternativeName>
    <alternativeName>
        <fullName>Small-inducible cytokine A21a</fullName>
    </alternativeName>
    <alternativeName>
        <fullName>Thymus-derived chemotactic agent 4</fullName>
        <shortName>TCA4</shortName>
    </alternativeName>
</protein>
<evidence type="ECO:0000250" key="1"/>
<evidence type="ECO:0000250" key="2">
    <source>
        <dbReference type="UniProtKB" id="O00585"/>
    </source>
</evidence>
<evidence type="ECO:0000255" key="3"/>
<evidence type="ECO:0000256" key="4">
    <source>
        <dbReference type="SAM" id="MobiDB-lite"/>
    </source>
</evidence>
<evidence type="ECO:0000269" key="5">
    <source>
    </source>
</evidence>
<evidence type="ECO:0000305" key="6"/>
<proteinExistence type="evidence at protein level"/>
<dbReference type="EMBL" id="AF001980">
    <property type="protein sequence ID" value="AAB86595.1"/>
    <property type="molecule type" value="mRNA"/>
</dbReference>
<dbReference type="EMBL" id="AF006637">
    <property type="protein sequence ID" value="AAB61440.1"/>
    <property type="molecule type" value="mRNA"/>
</dbReference>
<dbReference type="EMBL" id="AF171086">
    <property type="protein sequence ID" value="AAF16901.1"/>
    <property type="molecule type" value="Genomic_DNA"/>
</dbReference>
<dbReference type="EMBL" id="AF035684">
    <property type="protein sequence ID" value="AAC82613.1"/>
    <property type="molecule type" value="Genomic_DNA"/>
</dbReference>
<dbReference type="EMBL" id="AF307985">
    <property type="protein sequence ID" value="AAG45833.1"/>
    <property type="molecule type" value="Genomic_DNA"/>
</dbReference>
<dbReference type="EMBL" id="AK144258">
    <property type="protein sequence ID" value="BAE25802.1"/>
    <property type="molecule type" value="mRNA"/>
</dbReference>
<dbReference type="EMBL" id="AK155924">
    <property type="protein sequence ID" value="BAE33505.1"/>
    <property type="molecule type" value="mRNA"/>
</dbReference>
<dbReference type="EMBL" id="AL772334">
    <property type="status" value="NOT_ANNOTATED_CDS"/>
    <property type="molecule type" value="Genomic_DNA"/>
</dbReference>
<dbReference type="EMBL" id="BC025974">
    <property type="protein sequence ID" value="AAH25974.1"/>
    <property type="molecule type" value="mRNA"/>
</dbReference>
<dbReference type="EMBL" id="BC028747">
    <property type="protein sequence ID" value="AAH28747.1"/>
    <property type="molecule type" value="mRNA"/>
</dbReference>
<dbReference type="EMBL" id="BC038120">
    <property type="protein sequence ID" value="AAH38120.1"/>
    <property type="molecule type" value="mRNA"/>
</dbReference>
<dbReference type="CCDS" id="CCDS18081.1"/>
<dbReference type="RefSeq" id="NP_001180596.1">
    <property type="nucleotide sequence ID" value="NM_001193667.1"/>
</dbReference>
<dbReference type="RefSeq" id="NP_035254.1">
    <property type="nucleotide sequence ID" value="NM_011124.4"/>
</dbReference>
<dbReference type="SMR" id="P84444"/>
<dbReference type="FunCoup" id="P84444">
    <property type="interactions" value="986"/>
</dbReference>
<dbReference type="STRING" id="10090.ENSMUSP00000092732"/>
<dbReference type="PaxDb" id="10090-ENSMUSP00000092732"/>
<dbReference type="PeptideAtlas" id="P84444"/>
<dbReference type="ProteomicsDB" id="281247"/>
<dbReference type="DNASU" id="18829"/>
<dbReference type="Ensembl" id="ENSMUST00000095114.5">
    <property type="protein sequence ID" value="ENSMUSP00000092732.5"/>
    <property type="gene ID" value="ENSMUSG00000094686.2"/>
</dbReference>
<dbReference type="GeneID" id="18829"/>
<dbReference type="KEGG" id="mmu:18829"/>
<dbReference type="UCSC" id="uc008sny.2">
    <property type="organism name" value="mouse"/>
</dbReference>
<dbReference type="AGR" id="MGI:1349183"/>
<dbReference type="CTD" id="18829"/>
<dbReference type="MGI" id="MGI:1349183">
    <property type="gene designation" value="Ccl21a"/>
</dbReference>
<dbReference type="VEuPathDB" id="HostDB:ENSMUSG00000094686"/>
<dbReference type="VEuPathDB" id="HostDB:ENSMUSG00000095320"/>
<dbReference type="eggNOG" id="ENOG502S8D1">
    <property type="taxonomic scope" value="Eukaryota"/>
</dbReference>
<dbReference type="GeneTree" id="ENSGT01130000278316"/>
<dbReference type="HOGENOM" id="CLU_141716_3_2_1"/>
<dbReference type="InParanoid" id="P84444"/>
<dbReference type="OMA" id="CKRTEQP"/>
<dbReference type="OrthoDB" id="9445745at2759"/>
<dbReference type="PhylomeDB" id="P84444"/>
<dbReference type="TreeFam" id="TF338224"/>
<dbReference type="Reactome" id="R-MMU-380108">
    <property type="pathway name" value="Chemokine receptors bind chemokines"/>
</dbReference>
<dbReference type="Reactome" id="R-MMU-418594">
    <property type="pathway name" value="G alpha (i) signalling events"/>
</dbReference>
<dbReference type="BioGRID-ORCS" id="100504362">
    <property type="hits" value="1 hit in 11 CRISPR screens"/>
</dbReference>
<dbReference type="BioGRID-ORCS" id="18829">
    <property type="hits" value="3 hits in 26 CRISPR screens"/>
</dbReference>
<dbReference type="ChiTaRS" id="Ccl21a">
    <property type="organism name" value="mouse"/>
</dbReference>
<dbReference type="PRO" id="PR:P84444"/>
<dbReference type="Proteomes" id="UP000000589">
    <property type="component" value="Chromosome 4"/>
</dbReference>
<dbReference type="RNAct" id="P84444">
    <property type="molecule type" value="protein"/>
</dbReference>
<dbReference type="Bgee" id="ENSMUSG00000094686">
    <property type="expression patterns" value="Expressed in thymus and 45 other cell types or tissues"/>
</dbReference>
<dbReference type="GO" id="GO:0005615">
    <property type="term" value="C:extracellular space"/>
    <property type="evidence" value="ECO:0007669"/>
    <property type="project" value="UniProtKB-KW"/>
</dbReference>
<dbReference type="GO" id="GO:0031732">
    <property type="term" value="F:CCR7 chemokine receptor binding"/>
    <property type="evidence" value="ECO:0000353"/>
    <property type="project" value="BHF-UCL"/>
</dbReference>
<dbReference type="GO" id="GO:0008009">
    <property type="term" value="F:chemokine activity"/>
    <property type="evidence" value="ECO:0000314"/>
    <property type="project" value="BHF-UCL"/>
</dbReference>
<dbReference type="GO" id="GO:0048469">
    <property type="term" value="P:cell maturation"/>
    <property type="evidence" value="ECO:0000314"/>
    <property type="project" value="BHF-UCL"/>
</dbReference>
<dbReference type="GO" id="GO:1990869">
    <property type="term" value="P:cellular response to chemokine"/>
    <property type="evidence" value="ECO:0000315"/>
    <property type="project" value="BHF-UCL"/>
</dbReference>
<dbReference type="GO" id="GO:0071380">
    <property type="term" value="P:cellular response to prostaglandin E stimulus"/>
    <property type="evidence" value="ECO:0000250"/>
    <property type="project" value="BHF-UCL"/>
</dbReference>
<dbReference type="GO" id="GO:0038116">
    <property type="term" value="P:chemokine (C-C motif) ligand 21 signaling pathway"/>
    <property type="evidence" value="ECO:0000315"/>
    <property type="project" value="BHF-UCL"/>
</dbReference>
<dbReference type="GO" id="GO:0002407">
    <property type="term" value="P:dendritic cell chemotaxis"/>
    <property type="evidence" value="ECO:0000314"/>
    <property type="project" value="BHF-UCL"/>
</dbReference>
<dbReference type="GO" id="GO:0097026">
    <property type="term" value="P:dendritic cell dendrite assembly"/>
    <property type="evidence" value="ECO:0000314"/>
    <property type="project" value="BHF-UCL"/>
</dbReference>
<dbReference type="GO" id="GO:0001768">
    <property type="term" value="P:establishment of T cell polarity"/>
    <property type="evidence" value="ECO:0000250"/>
    <property type="project" value="BHF-UCL"/>
</dbReference>
<dbReference type="GO" id="GO:0006955">
    <property type="term" value="P:immune response"/>
    <property type="evidence" value="ECO:0007669"/>
    <property type="project" value="InterPro"/>
</dbReference>
<dbReference type="GO" id="GO:0001771">
    <property type="term" value="P:immunological synapse formation"/>
    <property type="evidence" value="ECO:0000314"/>
    <property type="project" value="BHF-UCL"/>
</dbReference>
<dbReference type="GO" id="GO:0050930">
    <property type="term" value="P:induction of positive chemotaxis"/>
    <property type="evidence" value="ECO:0000314"/>
    <property type="project" value="MGI"/>
</dbReference>
<dbReference type="GO" id="GO:0006954">
    <property type="term" value="P:inflammatory response"/>
    <property type="evidence" value="ECO:0007669"/>
    <property type="project" value="UniProtKB-KW"/>
</dbReference>
<dbReference type="GO" id="GO:0048535">
    <property type="term" value="P:lymph node development"/>
    <property type="evidence" value="ECO:0000315"/>
    <property type="project" value="MGI"/>
</dbReference>
<dbReference type="GO" id="GO:0035759">
    <property type="term" value="P:mesangial cell-matrix adhesion"/>
    <property type="evidence" value="ECO:0000250"/>
    <property type="project" value="BHF-UCL"/>
</dbReference>
<dbReference type="GO" id="GO:2000669">
    <property type="term" value="P:negative regulation of dendritic cell apoptotic process"/>
    <property type="evidence" value="ECO:0000250"/>
    <property type="project" value="BHF-UCL"/>
</dbReference>
<dbReference type="GO" id="GO:2000548">
    <property type="term" value="P:negative regulation of dendritic cell dendrite assembly"/>
    <property type="evidence" value="ECO:0000314"/>
    <property type="project" value="BHF-UCL"/>
</dbReference>
<dbReference type="GO" id="GO:0030838">
    <property type="term" value="P:positive regulation of actin filament polymerization"/>
    <property type="evidence" value="ECO:0000250"/>
    <property type="project" value="BHF-UCL"/>
</dbReference>
<dbReference type="GO" id="GO:0043123">
    <property type="term" value="P:positive regulation of canonical NF-kappaB signal transduction"/>
    <property type="evidence" value="ECO:0000250"/>
    <property type="project" value="BHF-UCL"/>
</dbReference>
<dbReference type="GO" id="GO:0033630">
    <property type="term" value="P:positive regulation of cell adhesion mediated by integrin"/>
    <property type="evidence" value="ECO:0000250"/>
    <property type="project" value="BHF-UCL"/>
</dbReference>
<dbReference type="GO" id="GO:2000147">
    <property type="term" value="P:positive regulation of cell motility"/>
    <property type="evidence" value="ECO:0000250"/>
    <property type="project" value="BHF-UCL"/>
</dbReference>
<dbReference type="GO" id="GO:0001954">
    <property type="term" value="P:positive regulation of cell-matrix adhesion"/>
    <property type="evidence" value="ECO:0000250"/>
    <property type="project" value="BHF-UCL"/>
</dbReference>
<dbReference type="GO" id="GO:0050921">
    <property type="term" value="P:positive regulation of chemotaxis"/>
    <property type="evidence" value="ECO:0000314"/>
    <property type="project" value="BHF-UCL"/>
</dbReference>
<dbReference type="GO" id="GO:0002606">
    <property type="term" value="P:positive regulation of dendritic cell antigen processing and presentation"/>
    <property type="evidence" value="ECO:0000314"/>
    <property type="project" value="BHF-UCL"/>
</dbReference>
<dbReference type="GO" id="GO:0070374">
    <property type="term" value="P:positive regulation of ERK1 and ERK2 cascade"/>
    <property type="evidence" value="ECO:0000250"/>
    <property type="project" value="BHF-UCL"/>
</dbReference>
<dbReference type="GO" id="GO:0051491">
    <property type="term" value="P:positive regulation of filopodium assembly"/>
    <property type="evidence" value="ECO:0000250"/>
    <property type="project" value="BHF-UCL"/>
</dbReference>
<dbReference type="GO" id="GO:0010560">
    <property type="term" value="P:positive regulation of glycoprotein biosynthetic process"/>
    <property type="evidence" value="ECO:0000314"/>
    <property type="project" value="BHF-UCL"/>
</dbReference>
<dbReference type="GO" id="GO:0046330">
    <property type="term" value="P:positive regulation of JNK cascade"/>
    <property type="evidence" value="ECO:0000250"/>
    <property type="project" value="BHF-UCL"/>
</dbReference>
<dbReference type="GO" id="GO:0010759">
    <property type="term" value="P:positive regulation of macrophage chemotaxis"/>
    <property type="evidence" value="ECO:0000303"/>
    <property type="project" value="BHF-UCL"/>
</dbReference>
<dbReference type="GO" id="GO:2000529">
    <property type="term" value="P:positive regulation of myeloid dendritic cell chemotaxis"/>
    <property type="evidence" value="ECO:0000250"/>
    <property type="project" value="BHF-UCL"/>
</dbReference>
<dbReference type="GO" id="GO:0090023">
    <property type="term" value="P:positive regulation of neutrophil chemotaxis"/>
    <property type="evidence" value="ECO:0000250"/>
    <property type="project" value="BHF-UCL"/>
</dbReference>
<dbReference type="GO" id="GO:0051897">
    <property type="term" value="P:positive regulation of phosphatidylinositol 3-kinase/protein kinase B signal transduction"/>
    <property type="evidence" value="ECO:0000250"/>
    <property type="project" value="BHF-UCL"/>
</dbReference>
<dbReference type="GO" id="GO:0031274">
    <property type="term" value="P:positive regulation of pseudopodium assembly"/>
    <property type="evidence" value="ECO:0000250"/>
    <property type="project" value="BHF-UCL"/>
</dbReference>
<dbReference type="GO" id="GO:0048260">
    <property type="term" value="P:positive regulation of receptor-mediated endocytosis"/>
    <property type="evidence" value="ECO:0000314"/>
    <property type="project" value="BHF-UCL"/>
</dbReference>
<dbReference type="GO" id="GO:0010820">
    <property type="term" value="P:positive regulation of T cell chemotaxis"/>
    <property type="evidence" value="ECO:0000315"/>
    <property type="project" value="BHF-UCL"/>
</dbReference>
<dbReference type="GO" id="GO:2000406">
    <property type="term" value="P:positive regulation of T cell migration"/>
    <property type="evidence" value="ECO:0000266"/>
    <property type="project" value="MGI"/>
</dbReference>
<dbReference type="GO" id="GO:0051209">
    <property type="term" value="P:release of sequestered calcium ion into cytosol"/>
    <property type="evidence" value="ECO:0000250"/>
    <property type="project" value="BHF-UCL"/>
</dbReference>
<dbReference type="GO" id="GO:0031529">
    <property type="term" value="P:ruffle organization"/>
    <property type="evidence" value="ECO:0000250"/>
    <property type="project" value="BHF-UCL"/>
</dbReference>
<dbReference type="GO" id="GO:0031295">
    <property type="term" value="P:T cell costimulation"/>
    <property type="evidence" value="ECO:0000314"/>
    <property type="project" value="BHF-UCL"/>
</dbReference>
<dbReference type="FunFam" id="2.40.50.40:FF:000024">
    <property type="entry name" value="C-C motif chemokine 21"/>
    <property type="match status" value="1"/>
</dbReference>
<dbReference type="Gene3D" id="2.40.50.40">
    <property type="match status" value="1"/>
</dbReference>
<dbReference type="InterPro" id="IPR039809">
    <property type="entry name" value="Chemokine_b/g/d"/>
</dbReference>
<dbReference type="InterPro" id="IPR001811">
    <property type="entry name" value="Chemokine_IL8-like_dom"/>
</dbReference>
<dbReference type="InterPro" id="IPR036048">
    <property type="entry name" value="Interleukin_8-like_sf"/>
</dbReference>
<dbReference type="PANTHER" id="PTHR12015:SF72">
    <property type="entry name" value="C-C MOTIF CHEMOKINE 21"/>
    <property type="match status" value="1"/>
</dbReference>
<dbReference type="PANTHER" id="PTHR12015">
    <property type="entry name" value="SMALL INDUCIBLE CYTOKINE A"/>
    <property type="match status" value="1"/>
</dbReference>
<dbReference type="Pfam" id="PF00048">
    <property type="entry name" value="IL8"/>
    <property type="match status" value="1"/>
</dbReference>
<dbReference type="SMART" id="SM00199">
    <property type="entry name" value="SCY"/>
    <property type="match status" value="1"/>
</dbReference>
<dbReference type="SUPFAM" id="SSF54117">
    <property type="entry name" value="Interleukin 8-like chemokines"/>
    <property type="match status" value="1"/>
</dbReference>
<reference key="1">
    <citation type="journal article" date="1997" name="J. Immunol.">
        <title>Identification and characterization of a novel beta chemokine containing six conserved cysteines.</title>
        <authorList>
            <person name="Hedrick J.A."/>
            <person name="Zlotnik A."/>
        </authorList>
    </citation>
    <scope>NUCLEOTIDE SEQUENCE [MRNA]</scope>
</reference>
<reference key="2">
    <citation type="journal article" date="1997" name="J. Immunol.">
        <title>Identification of a new mouse beta-chemokine, thymus-derived chemotactic agent 4, with activity on T lymphocytes and mesangial cells.</title>
        <authorList>
            <person name="Tanabe S."/>
            <person name="Lu Z."/>
            <person name="Luo Y."/>
            <person name="Quackenbush E.J."/>
            <person name="Berman M.A."/>
            <person name="Collins-Racie L.A."/>
            <person name="Mi S."/>
            <person name="Reilly C."/>
            <person name="Lo D."/>
            <person name="Jacobs K.A."/>
            <person name="Dorf M.E."/>
        </authorList>
    </citation>
    <scope>NUCLEOTIDE SEQUENCE [MRNA]</scope>
    <source>
        <strain>BALB/cJ</strain>
        <strain>C57BL/6J</strain>
        <tissue>Thymus</tissue>
    </source>
</reference>
<reference key="3">
    <citation type="journal article" date="1999" name="J. Exp. Med.">
        <title>The reduced expression of 6Ckine in the plt mouse results from the deletion of one of two 6Ckine genes.</title>
        <authorList>
            <person name="Vassileva G."/>
            <person name="Soto H."/>
            <person name="Zlotnik A."/>
            <person name="Nakano H."/>
            <person name="Kakiuchi T."/>
            <person name="Hedrick J.A."/>
            <person name="Lira S.A."/>
        </authorList>
    </citation>
    <scope>NUCLEOTIDE SEQUENCE [GENOMIC DNA]</scope>
    <scope>INVOLVEMENT IN PLT</scope>
    <source>
        <strain>129/SvJ</strain>
        <tissue>Embryonic stem cell</tissue>
    </source>
</reference>
<reference key="4">
    <citation type="journal article" date="2001" name="J. Immunol.">
        <title>Gene duplications at the chemokine locus on mouse chromosome 4: multiple strain-specific haplotypes and the deletion of secondary lymphoid-organ chemokine and EBI-1 ligand chemokine genes in the plt mutation.</title>
        <authorList>
            <person name="Nakano H."/>
            <person name="Gunn M.D."/>
        </authorList>
    </citation>
    <scope>NUCLEOTIDE SEQUENCE [GENOMIC DNA]</scope>
    <source>
        <strain>129/Ola</strain>
    </source>
</reference>
<reference key="5">
    <citation type="journal article" date="2005" name="Science">
        <title>The transcriptional landscape of the mammalian genome.</title>
        <authorList>
            <person name="Carninci P."/>
            <person name="Kasukawa T."/>
            <person name="Katayama S."/>
            <person name="Gough J."/>
            <person name="Frith M.C."/>
            <person name="Maeda N."/>
            <person name="Oyama R."/>
            <person name="Ravasi T."/>
            <person name="Lenhard B."/>
            <person name="Wells C."/>
            <person name="Kodzius R."/>
            <person name="Shimokawa K."/>
            <person name="Bajic V.B."/>
            <person name="Brenner S.E."/>
            <person name="Batalov S."/>
            <person name="Forrest A.R."/>
            <person name="Zavolan M."/>
            <person name="Davis M.J."/>
            <person name="Wilming L.G."/>
            <person name="Aidinis V."/>
            <person name="Allen J.E."/>
            <person name="Ambesi-Impiombato A."/>
            <person name="Apweiler R."/>
            <person name="Aturaliya R.N."/>
            <person name="Bailey T.L."/>
            <person name="Bansal M."/>
            <person name="Baxter L."/>
            <person name="Beisel K.W."/>
            <person name="Bersano T."/>
            <person name="Bono H."/>
            <person name="Chalk A.M."/>
            <person name="Chiu K.P."/>
            <person name="Choudhary V."/>
            <person name="Christoffels A."/>
            <person name="Clutterbuck D.R."/>
            <person name="Crowe M.L."/>
            <person name="Dalla E."/>
            <person name="Dalrymple B.P."/>
            <person name="de Bono B."/>
            <person name="Della Gatta G."/>
            <person name="di Bernardo D."/>
            <person name="Down T."/>
            <person name="Engstrom P."/>
            <person name="Fagiolini M."/>
            <person name="Faulkner G."/>
            <person name="Fletcher C.F."/>
            <person name="Fukushima T."/>
            <person name="Furuno M."/>
            <person name="Futaki S."/>
            <person name="Gariboldi M."/>
            <person name="Georgii-Hemming P."/>
            <person name="Gingeras T.R."/>
            <person name="Gojobori T."/>
            <person name="Green R.E."/>
            <person name="Gustincich S."/>
            <person name="Harbers M."/>
            <person name="Hayashi Y."/>
            <person name="Hensch T.K."/>
            <person name="Hirokawa N."/>
            <person name="Hill D."/>
            <person name="Huminiecki L."/>
            <person name="Iacono M."/>
            <person name="Ikeo K."/>
            <person name="Iwama A."/>
            <person name="Ishikawa T."/>
            <person name="Jakt M."/>
            <person name="Kanapin A."/>
            <person name="Katoh M."/>
            <person name="Kawasawa Y."/>
            <person name="Kelso J."/>
            <person name="Kitamura H."/>
            <person name="Kitano H."/>
            <person name="Kollias G."/>
            <person name="Krishnan S.P."/>
            <person name="Kruger A."/>
            <person name="Kummerfeld S.K."/>
            <person name="Kurochkin I.V."/>
            <person name="Lareau L.F."/>
            <person name="Lazarevic D."/>
            <person name="Lipovich L."/>
            <person name="Liu J."/>
            <person name="Liuni S."/>
            <person name="McWilliam S."/>
            <person name="Madan Babu M."/>
            <person name="Madera M."/>
            <person name="Marchionni L."/>
            <person name="Matsuda H."/>
            <person name="Matsuzawa S."/>
            <person name="Miki H."/>
            <person name="Mignone F."/>
            <person name="Miyake S."/>
            <person name="Morris K."/>
            <person name="Mottagui-Tabar S."/>
            <person name="Mulder N."/>
            <person name="Nakano N."/>
            <person name="Nakauchi H."/>
            <person name="Ng P."/>
            <person name="Nilsson R."/>
            <person name="Nishiguchi S."/>
            <person name="Nishikawa S."/>
            <person name="Nori F."/>
            <person name="Ohara O."/>
            <person name="Okazaki Y."/>
            <person name="Orlando V."/>
            <person name="Pang K.C."/>
            <person name="Pavan W.J."/>
            <person name="Pavesi G."/>
            <person name="Pesole G."/>
            <person name="Petrovsky N."/>
            <person name="Piazza S."/>
            <person name="Reed J."/>
            <person name="Reid J.F."/>
            <person name="Ring B.Z."/>
            <person name="Ringwald M."/>
            <person name="Rost B."/>
            <person name="Ruan Y."/>
            <person name="Salzberg S.L."/>
            <person name="Sandelin A."/>
            <person name="Schneider C."/>
            <person name="Schoenbach C."/>
            <person name="Sekiguchi K."/>
            <person name="Semple C.A."/>
            <person name="Seno S."/>
            <person name="Sessa L."/>
            <person name="Sheng Y."/>
            <person name="Shibata Y."/>
            <person name="Shimada H."/>
            <person name="Shimada K."/>
            <person name="Silva D."/>
            <person name="Sinclair B."/>
            <person name="Sperling S."/>
            <person name="Stupka E."/>
            <person name="Sugiura K."/>
            <person name="Sultana R."/>
            <person name="Takenaka Y."/>
            <person name="Taki K."/>
            <person name="Tammoja K."/>
            <person name="Tan S.L."/>
            <person name="Tang S."/>
            <person name="Taylor M.S."/>
            <person name="Tegner J."/>
            <person name="Teichmann S.A."/>
            <person name="Ueda H.R."/>
            <person name="van Nimwegen E."/>
            <person name="Verardo R."/>
            <person name="Wei C.L."/>
            <person name="Yagi K."/>
            <person name="Yamanishi H."/>
            <person name="Zabarovsky E."/>
            <person name="Zhu S."/>
            <person name="Zimmer A."/>
            <person name="Hide W."/>
            <person name="Bult C."/>
            <person name="Grimmond S.M."/>
            <person name="Teasdale R.D."/>
            <person name="Liu E.T."/>
            <person name="Brusic V."/>
            <person name="Quackenbush J."/>
            <person name="Wahlestedt C."/>
            <person name="Mattick J.S."/>
            <person name="Hume D.A."/>
            <person name="Kai C."/>
            <person name="Sasaki D."/>
            <person name="Tomaru Y."/>
            <person name="Fukuda S."/>
            <person name="Kanamori-Katayama M."/>
            <person name="Suzuki M."/>
            <person name="Aoki J."/>
            <person name="Arakawa T."/>
            <person name="Iida J."/>
            <person name="Imamura K."/>
            <person name="Itoh M."/>
            <person name="Kato T."/>
            <person name="Kawaji H."/>
            <person name="Kawagashira N."/>
            <person name="Kawashima T."/>
            <person name="Kojima M."/>
            <person name="Kondo S."/>
            <person name="Konno H."/>
            <person name="Nakano K."/>
            <person name="Ninomiya N."/>
            <person name="Nishio T."/>
            <person name="Okada M."/>
            <person name="Plessy C."/>
            <person name="Shibata K."/>
            <person name="Shiraki T."/>
            <person name="Suzuki S."/>
            <person name="Tagami M."/>
            <person name="Waki K."/>
            <person name="Watahiki A."/>
            <person name="Okamura-Oho Y."/>
            <person name="Suzuki H."/>
            <person name="Kawai J."/>
            <person name="Hayashizaki Y."/>
        </authorList>
    </citation>
    <scope>NUCLEOTIDE SEQUENCE [LARGE SCALE MRNA]</scope>
    <source>
        <strain>C57BL/6J</strain>
        <strain>NOD</strain>
        <tissue>Lymph node</tissue>
        <tissue>Spleen</tissue>
    </source>
</reference>
<reference key="6">
    <citation type="journal article" date="2009" name="PLoS Biol.">
        <title>Lineage-specific biology revealed by a finished genome assembly of the mouse.</title>
        <authorList>
            <person name="Church D.M."/>
            <person name="Goodstadt L."/>
            <person name="Hillier L.W."/>
            <person name="Zody M.C."/>
            <person name="Goldstein S."/>
            <person name="She X."/>
            <person name="Bult C.J."/>
            <person name="Agarwala R."/>
            <person name="Cherry J.L."/>
            <person name="DiCuccio M."/>
            <person name="Hlavina W."/>
            <person name="Kapustin Y."/>
            <person name="Meric P."/>
            <person name="Maglott D."/>
            <person name="Birtle Z."/>
            <person name="Marques A.C."/>
            <person name="Graves T."/>
            <person name="Zhou S."/>
            <person name="Teague B."/>
            <person name="Potamousis K."/>
            <person name="Churas C."/>
            <person name="Place M."/>
            <person name="Herschleb J."/>
            <person name="Runnheim R."/>
            <person name="Forrest D."/>
            <person name="Amos-Landgraf J."/>
            <person name="Schwartz D.C."/>
            <person name="Cheng Z."/>
            <person name="Lindblad-Toh K."/>
            <person name="Eichler E.E."/>
            <person name="Ponting C.P."/>
        </authorList>
    </citation>
    <scope>NUCLEOTIDE SEQUENCE [LARGE SCALE GENOMIC DNA]</scope>
    <source>
        <strain>C57BL/6J</strain>
    </source>
</reference>
<reference key="7">
    <citation type="journal article" date="2004" name="Genome Res.">
        <title>The status, quality, and expansion of the NIH full-length cDNA project: the Mammalian Gene Collection (MGC).</title>
        <authorList>
            <consortium name="The MGC Project Team"/>
        </authorList>
    </citation>
    <scope>NUCLEOTIDE SEQUENCE [LARGE SCALE MRNA]</scope>
    <source>
        <strain>C57BL/6J</strain>
        <strain>FVB/N</strain>
        <tissue>Colon</tissue>
        <tissue>Mammary gland</tissue>
    </source>
</reference>
<reference key="8">
    <citation type="journal article" date="1998" name="Proc. Natl. Acad. Sci. U.S.A.">
        <title>A chemokine expressed in lymphoid high endothelial venules promotes the adhesion and chemotaxis of naive T lymphocytes.</title>
        <authorList>
            <person name="Gunn M.D."/>
            <person name="Tangemann K."/>
            <person name="Tam C."/>
            <person name="Cyster J.G."/>
            <person name="Rosen S.D."/>
            <person name="Williams L.T."/>
        </authorList>
    </citation>
    <scope>CHARACTERIZATION</scope>
</reference>
<reference key="9">
    <citation type="journal article" date="2020" name="Nature">
        <title>A GPR174-CCL21 module imparts sexual dimorphism to humoral immunity.</title>
        <authorList>
            <person name="Zhao R."/>
            <person name="Chen X."/>
            <person name="Ma W."/>
            <person name="Zhang J."/>
            <person name="Guo J."/>
            <person name="Zhong X."/>
            <person name="Yao J."/>
            <person name="Sun J."/>
            <person name="Rubinfien J."/>
            <person name="Zhou X."/>
            <person name="Wang J."/>
            <person name="Qi H."/>
        </authorList>
    </citation>
    <scope>INTERACTION WITH GPR174</scope>
</reference>
<gene>
    <name type="primary">Ccl21a</name>
    <name type="synonym">Scya21</name>
    <name type="synonym">Scya21a</name>
</gene>
<organism>
    <name type="scientific">Mus musculus</name>
    <name type="common">Mouse</name>
    <dbReference type="NCBI Taxonomy" id="10090"/>
    <lineage>
        <taxon>Eukaryota</taxon>
        <taxon>Metazoa</taxon>
        <taxon>Chordata</taxon>
        <taxon>Craniata</taxon>
        <taxon>Vertebrata</taxon>
        <taxon>Euteleostomi</taxon>
        <taxon>Mammalia</taxon>
        <taxon>Eutheria</taxon>
        <taxon>Euarchontoglires</taxon>
        <taxon>Glires</taxon>
        <taxon>Rodentia</taxon>
        <taxon>Myomorpha</taxon>
        <taxon>Muroidea</taxon>
        <taxon>Muridae</taxon>
        <taxon>Murinae</taxon>
        <taxon>Mus</taxon>
        <taxon>Mus</taxon>
    </lineage>
</organism>
<keyword id="KW-0145">Chemotaxis</keyword>
<keyword id="KW-0202">Cytokine</keyword>
<keyword id="KW-1015">Disulfide bond</keyword>
<keyword id="KW-0395">Inflammatory response</keyword>
<keyword id="KW-1185">Reference proteome</keyword>
<keyword id="KW-0964">Secreted</keyword>
<keyword id="KW-0732">Signal</keyword>
<accession>P84444</accession>
<accession>O09002</accession>
<accession>O09006</accession>
<accession>Q3U1J2</accession>
<accession>Q91V84</accession>
<sequence>MAQMMTLSLLSLVLALCIPWTQGSDGGGQDCCLKYSQKKIPYSIVRGYRKQEPSLGCPIPAILFSPRKHSKPELCANPEEGWVQNLMRRLDQPPAPGKQSPGCRKNRGTSKSGKKGKGSKGCKRTEQTQPSRG</sequence>
<name>CC21A_MOUSE</name>
<feature type="signal peptide" evidence="3">
    <location>
        <begin position="1"/>
        <end position="23"/>
    </location>
</feature>
<feature type="chain" id="PRO_0000005223" description="C-C motif chemokine 21a">
    <location>
        <begin position="24"/>
        <end position="133"/>
    </location>
</feature>
<feature type="region of interest" description="Disordered" evidence="4">
    <location>
        <begin position="86"/>
        <end position="133"/>
    </location>
</feature>
<feature type="region of interest" description="C-terminal basic extension">
    <location>
        <begin position="98"/>
        <end position="133"/>
    </location>
</feature>
<feature type="compositionally biased region" description="Basic residues" evidence="4">
    <location>
        <begin position="104"/>
        <end position="122"/>
    </location>
</feature>
<feature type="disulfide bond" evidence="1">
    <location>
        <begin position="31"/>
        <end position="57"/>
    </location>
</feature>
<feature type="disulfide bond" evidence="1">
    <location>
        <begin position="32"/>
        <end position="75"/>
    </location>
</feature>
<feature type="disulfide bond" evidence="3">
    <location>
        <begin position="103"/>
        <end position="122"/>
    </location>
</feature>
<comment type="function">
    <text>Inhibits hemopoiesis and stimulates chemotaxis. Chemotactic in vitro for thymocytes and activated T-cells, but not for B-cells, macrophages, or neutrophils. Potent mesangial cell chemoattractant. Shows preferential activity towards naive T-cells. May play a role in mediating homing of lymphocytes to secondary lymphoid organs.</text>
</comment>
<comment type="subunit">
    <text evidence="2">Binds to CCR7 and to CXCR3. Interacts with PDPN; relocalizes PDPN to the basolateral membrane. Interacts with GPR174 (PubMed:31875850).</text>
</comment>
<comment type="subcellular location">
    <subcellularLocation>
        <location>Secreted</location>
    </subcellularLocation>
</comment>
<comment type="tissue specificity">
    <text>Expressed strongly in lung, spleen, thymus, peripheral and mesentric lymph nodes. Also expressed in the testis, kidney, liver, and heart.</text>
</comment>
<comment type="disease">
    <text evidence="5">Mice carrying an autosomal recessive mutation designated paucity of lymph node T-cells (plt) show dramatically reduced numbers of T-cells in lymph nodes, Peyer patches, and the white pulp of the spleen. Plt seems to correspond to Scya21b.</text>
</comment>
<comment type="miscellaneous">
    <text>Three genes code for Ccl21 in mouse. Ccl21b and Ccl21c produce identical proteins while the protein produced by Ccl21a differs at only one position. Ccl21b and Ccl21c have 'Leu-65' (6Ckine-Leu) while Ccl21a has Ser-65 (6Ckine-Ser).</text>
</comment>
<comment type="similarity">
    <text evidence="6">Belongs to the intercrine beta (chemokine CC) family.</text>
</comment>